<keyword id="KW-0963">Cytoplasm</keyword>
<keyword id="KW-0488">Methylation</keyword>
<keyword id="KW-0648">Protein biosynthesis</keyword>
<accession>Q9AG29</accession>
<comment type="function">
    <text evidence="1">Peptide chain release factor 1 directs the termination of translation in response to the peptide chain termination codons UAG and UAA.</text>
</comment>
<comment type="subcellular location">
    <subcellularLocation>
        <location evidence="1">Cytoplasm</location>
    </subcellularLocation>
</comment>
<comment type="PTM">
    <text evidence="1">Methylated by PrmC. Methylation increases the termination efficiency of RF1.</text>
</comment>
<comment type="similarity">
    <text evidence="1">Belongs to the prokaryotic/mitochondrial release factor family.</text>
</comment>
<sequence length="359" mass="40673">MNIYDQLQPVEDRYEELGELLSDPYVVSDTKRFMELSREEANTRETVTAYREYKQVIQNISDAEEMIKDASGDAELEEMAKEELKESKAAKEEYEERLKILLLPKDPNDDKNIILEIRGAAGGDEAALFAGDLLTMYQKYAETQGWRFEVMESSVNGVGGIKEVVAMVSGQSVYSKLKYESGAHRVQRVPVTESQGRVHTSTATVLVMPEVEEVEYEIDQKDLRADIYHASGAGGQNVNKVATAVRMVHIPTGIKVEMQEERTQQKNRDKAMKIIRARVADHFAQIAQDEQDAERKSTVGTGDRSERIRTYNFPQNRVTDHRIGLTLQKLDTILSGKMDEVIDALVMYDQTQKLEALNK</sequence>
<organism>
    <name type="scientific">Streptococcus agalactiae</name>
    <dbReference type="NCBI Taxonomy" id="1311"/>
    <lineage>
        <taxon>Bacteria</taxon>
        <taxon>Bacillati</taxon>
        <taxon>Bacillota</taxon>
        <taxon>Bacilli</taxon>
        <taxon>Lactobacillales</taxon>
        <taxon>Streptococcaceae</taxon>
        <taxon>Streptococcus</taxon>
    </lineage>
</organism>
<feature type="chain" id="PRO_0000177747" description="Peptide chain release factor 1">
    <location>
        <begin position="1"/>
        <end position="359"/>
    </location>
</feature>
<feature type="modified residue" description="N5-methylglutamine" evidence="1">
    <location>
        <position position="236"/>
    </location>
</feature>
<evidence type="ECO:0000255" key="1">
    <source>
        <dbReference type="HAMAP-Rule" id="MF_00093"/>
    </source>
</evidence>
<reference key="1">
    <citation type="submission" date="2001-01" db="EMBL/GenBank/DDBJ databases">
        <title>Molecular cloning of the Streptococcus agalactiae gene encoding peptide-chain release factor.</title>
        <authorList>
            <person name="Chiou J."/>
        </authorList>
    </citation>
    <scope>NUCLEOTIDE SEQUENCE [GENOMIC DNA]</scope>
</reference>
<protein>
    <recommendedName>
        <fullName evidence="1">Peptide chain release factor 1</fullName>
        <shortName evidence="1">RF-1</shortName>
    </recommendedName>
</protein>
<dbReference type="EMBL" id="AF343879">
    <property type="protein sequence ID" value="AAK27505.1"/>
    <property type="molecule type" value="Genomic_DNA"/>
</dbReference>
<dbReference type="SMR" id="Q9AG29"/>
<dbReference type="GO" id="GO:0005737">
    <property type="term" value="C:cytoplasm"/>
    <property type="evidence" value="ECO:0007669"/>
    <property type="project" value="UniProtKB-SubCell"/>
</dbReference>
<dbReference type="GO" id="GO:0016149">
    <property type="term" value="F:translation release factor activity, codon specific"/>
    <property type="evidence" value="ECO:0007669"/>
    <property type="project" value="UniProtKB-UniRule"/>
</dbReference>
<dbReference type="FunFam" id="3.30.160.20:FF:000027">
    <property type="entry name" value="Peptide chain release factor 1"/>
    <property type="match status" value="1"/>
</dbReference>
<dbReference type="FunFam" id="3.30.70.1660:FF:000002">
    <property type="entry name" value="Peptide chain release factor 1"/>
    <property type="match status" value="1"/>
</dbReference>
<dbReference type="FunFam" id="3.30.70.1660:FF:000004">
    <property type="entry name" value="Peptide chain release factor 1"/>
    <property type="match status" value="1"/>
</dbReference>
<dbReference type="Gene3D" id="3.30.160.20">
    <property type="match status" value="1"/>
</dbReference>
<dbReference type="Gene3D" id="3.30.70.1660">
    <property type="match status" value="2"/>
</dbReference>
<dbReference type="Gene3D" id="6.10.140.1950">
    <property type="match status" value="1"/>
</dbReference>
<dbReference type="HAMAP" id="MF_00093">
    <property type="entry name" value="Rel_fac_1"/>
    <property type="match status" value="1"/>
</dbReference>
<dbReference type="InterPro" id="IPR005139">
    <property type="entry name" value="PCRF"/>
</dbReference>
<dbReference type="InterPro" id="IPR000352">
    <property type="entry name" value="Pep_chain_release_fac_I"/>
</dbReference>
<dbReference type="InterPro" id="IPR045853">
    <property type="entry name" value="Pep_chain_release_fac_I_sf"/>
</dbReference>
<dbReference type="InterPro" id="IPR050057">
    <property type="entry name" value="Prokaryotic/Mito_RF"/>
</dbReference>
<dbReference type="InterPro" id="IPR004373">
    <property type="entry name" value="RF-1"/>
</dbReference>
<dbReference type="NCBIfam" id="TIGR00019">
    <property type="entry name" value="prfA"/>
    <property type="match status" value="1"/>
</dbReference>
<dbReference type="NCBIfam" id="NF001859">
    <property type="entry name" value="PRK00591.1"/>
    <property type="match status" value="1"/>
</dbReference>
<dbReference type="PANTHER" id="PTHR43804">
    <property type="entry name" value="LD18447P"/>
    <property type="match status" value="1"/>
</dbReference>
<dbReference type="PANTHER" id="PTHR43804:SF7">
    <property type="entry name" value="LD18447P"/>
    <property type="match status" value="1"/>
</dbReference>
<dbReference type="Pfam" id="PF03462">
    <property type="entry name" value="PCRF"/>
    <property type="match status" value="1"/>
</dbReference>
<dbReference type="Pfam" id="PF00472">
    <property type="entry name" value="RF-1"/>
    <property type="match status" value="1"/>
</dbReference>
<dbReference type="SMART" id="SM00937">
    <property type="entry name" value="PCRF"/>
    <property type="match status" value="1"/>
</dbReference>
<dbReference type="SUPFAM" id="SSF75620">
    <property type="entry name" value="Release factor"/>
    <property type="match status" value="1"/>
</dbReference>
<dbReference type="PROSITE" id="PS00745">
    <property type="entry name" value="RF_PROK_I"/>
    <property type="match status" value="1"/>
</dbReference>
<gene>
    <name evidence="1" type="primary">prfA</name>
</gene>
<name>RF1_STRAG</name>
<proteinExistence type="inferred from homology"/>